<keyword id="KW-1267">Proteomics identification</keyword>
<keyword id="KW-1185">Reference proteome</keyword>
<name>ACL10_HUMAN</name>
<organism>
    <name type="scientific">Homo sapiens</name>
    <name type="common">Human</name>
    <dbReference type="NCBI Taxonomy" id="9606"/>
    <lineage>
        <taxon>Eukaryota</taxon>
        <taxon>Metazoa</taxon>
        <taxon>Chordata</taxon>
        <taxon>Craniata</taxon>
        <taxon>Vertebrata</taxon>
        <taxon>Euteleostomi</taxon>
        <taxon>Mammalia</taxon>
        <taxon>Eutheria</taxon>
        <taxon>Euarchontoglires</taxon>
        <taxon>Primates</taxon>
        <taxon>Haplorrhini</taxon>
        <taxon>Catarrhini</taxon>
        <taxon>Hominidae</taxon>
        <taxon>Homo</taxon>
    </lineage>
</organism>
<dbReference type="EMBL" id="AL121906">
    <property type="status" value="NOT_ANNOTATED_CDS"/>
    <property type="molecule type" value="Genomic_DNA"/>
</dbReference>
<dbReference type="EMBL" id="CH471077">
    <property type="protein sequence ID" value="EAW76309.1"/>
    <property type="molecule type" value="Genomic_DNA"/>
</dbReference>
<dbReference type="EMBL" id="BC137111">
    <property type="protein sequence ID" value="AAI37112.1"/>
    <property type="molecule type" value="mRNA"/>
</dbReference>
<dbReference type="EMBL" id="BC137114">
    <property type="protein sequence ID" value="AAI37115.1"/>
    <property type="molecule type" value="mRNA"/>
</dbReference>
<dbReference type="CCDS" id="CCDS33463.1"/>
<dbReference type="RefSeq" id="NP_001019846.1">
    <property type="nucleotide sequence ID" value="NM_001024675.2"/>
</dbReference>
<dbReference type="SMR" id="Q5JWF8"/>
<dbReference type="FunCoup" id="Q5JWF8">
    <property type="interactions" value="5"/>
</dbReference>
<dbReference type="STRING" id="9606.ENSP00000329647"/>
<dbReference type="iPTMnet" id="Q5JWF8"/>
<dbReference type="PhosphoSitePlus" id="Q5JWF8"/>
<dbReference type="BioMuta" id="ACTL10"/>
<dbReference type="DMDM" id="74742586"/>
<dbReference type="MassIVE" id="Q5JWF8"/>
<dbReference type="PaxDb" id="9606-ENSP00000329647"/>
<dbReference type="PeptideAtlas" id="Q5JWF8"/>
<dbReference type="ProteomicsDB" id="63387"/>
<dbReference type="Antibodypedia" id="57049">
    <property type="antibodies" value="12 antibodies from 1 providers"/>
</dbReference>
<dbReference type="DNASU" id="170487"/>
<dbReference type="Ensembl" id="ENST00000677665.1">
    <property type="protein sequence ID" value="ENSP00000504425.1"/>
    <property type="gene ID" value="ENSG00000288649.2"/>
</dbReference>
<dbReference type="GeneID" id="170487"/>
<dbReference type="KEGG" id="hsa:170487"/>
<dbReference type="MANE-Select" id="ENST00000677665.1">
    <property type="protein sequence ID" value="ENSP00000504425.1"/>
    <property type="RefSeq nucleotide sequence ID" value="NM_001024675.2"/>
    <property type="RefSeq protein sequence ID" value="NP_001019846.1"/>
</dbReference>
<dbReference type="UCSC" id="uc002wzt.3">
    <property type="organism name" value="human"/>
</dbReference>
<dbReference type="AGR" id="HGNC:16127"/>
<dbReference type="CTD" id="170487"/>
<dbReference type="DisGeNET" id="170487"/>
<dbReference type="GeneCards" id="ACTL10"/>
<dbReference type="HGNC" id="HGNC:16127">
    <property type="gene designation" value="ACTL10"/>
</dbReference>
<dbReference type="HPA" id="ENSG00000288649">
    <property type="expression patterns" value="Tissue enriched (testis)"/>
</dbReference>
<dbReference type="neXtProt" id="NX_Q5JWF8"/>
<dbReference type="PharmGKB" id="PA25676"/>
<dbReference type="VEuPathDB" id="HostDB:ENSG00000182584"/>
<dbReference type="eggNOG" id="KOG0676">
    <property type="taxonomic scope" value="Eukaryota"/>
</dbReference>
<dbReference type="GeneTree" id="ENSGT00940000162922"/>
<dbReference type="HOGENOM" id="CLU_027965_5_2_1"/>
<dbReference type="InParanoid" id="Q5JWF8"/>
<dbReference type="OrthoDB" id="9870582at2759"/>
<dbReference type="PAN-GO" id="Q5JWF8">
    <property type="GO annotations" value="1 GO annotation based on evolutionary models"/>
</dbReference>
<dbReference type="PhylomeDB" id="Q5JWF8"/>
<dbReference type="TreeFam" id="TF300361"/>
<dbReference type="PathwayCommons" id="Q5JWF8"/>
<dbReference type="SignaLink" id="Q5JWF8"/>
<dbReference type="BioGRID-ORCS" id="170487">
    <property type="hits" value="21 hits in 1141 CRISPR screens"/>
</dbReference>
<dbReference type="GenomeRNAi" id="170487"/>
<dbReference type="Pharos" id="Q5JWF8">
    <property type="development level" value="Tdark"/>
</dbReference>
<dbReference type="PRO" id="PR:Q5JWF8"/>
<dbReference type="Proteomes" id="UP000005640">
    <property type="component" value="Chromosome 20"/>
</dbReference>
<dbReference type="RNAct" id="Q5JWF8">
    <property type="molecule type" value="protein"/>
</dbReference>
<dbReference type="Bgee" id="ENSG00000288649">
    <property type="expression patterns" value="Expressed in male germ line stem cell (sensu Vertebrata) in testis and 85 other cell types or tissues"/>
</dbReference>
<dbReference type="GO" id="GO:0015629">
    <property type="term" value="C:actin cytoskeleton"/>
    <property type="evidence" value="ECO:0000318"/>
    <property type="project" value="GO_Central"/>
</dbReference>
<dbReference type="FunFam" id="3.30.420.40:FF:000058">
    <property type="entry name" value="Putative actin-related protein 5"/>
    <property type="match status" value="1"/>
</dbReference>
<dbReference type="Gene3D" id="3.30.420.40">
    <property type="match status" value="2"/>
</dbReference>
<dbReference type="Gene3D" id="3.90.640.10">
    <property type="entry name" value="Actin, Chain A, domain 4"/>
    <property type="match status" value="1"/>
</dbReference>
<dbReference type="InterPro" id="IPR004000">
    <property type="entry name" value="Actin"/>
</dbReference>
<dbReference type="InterPro" id="IPR043129">
    <property type="entry name" value="ATPase_NBD"/>
</dbReference>
<dbReference type="PANTHER" id="PTHR11937">
    <property type="entry name" value="ACTIN"/>
    <property type="match status" value="1"/>
</dbReference>
<dbReference type="Pfam" id="PF00022">
    <property type="entry name" value="Actin"/>
    <property type="match status" value="1"/>
</dbReference>
<dbReference type="SMART" id="SM00268">
    <property type="entry name" value="ACTIN"/>
    <property type="match status" value="1"/>
</dbReference>
<dbReference type="SUPFAM" id="SSF53067">
    <property type="entry name" value="Actin-like ATPase domain"/>
    <property type="match status" value="1"/>
</dbReference>
<comment type="similarity">
    <text evidence="1">Belongs to the actin family.</text>
</comment>
<proteinExistence type="evidence at protein level"/>
<reference key="1">
    <citation type="journal article" date="2001" name="Nature">
        <title>The DNA sequence and comparative analysis of human chromosome 20.</title>
        <authorList>
            <person name="Deloukas P."/>
            <person name="Matthews L.H."/>
            <person name="Ashurst J.L."/>
            <person name="Burton J."/>
            <person name="Gilbert J.G.R."/>
            <person name="Jones M."/>
            <person name="Stavrides G."/>
            <person name="Almeida J.P."/>
            <person name="Babbage A.K."/>
            <person name="Bagguley C.L."/>
            <person name="Bailey J."/>
            <person name="Barlow K.F."/>
            <person name="Bates K.N."/>
            <person name="Beard L.M."/>
            <person name="Beare D.M."/>
            <person name="Beasley O.P."/>
            <person name="Bird C.P."/>
            <person name="Blakey S.E."/>
            <person name="Bridgeman A.M."/>
            <person name="Brown A.J."/>
            <person name="Buck D."/>
            <person name="Burrill W.D."/>
            <person name="Butler A.P."/>
            <person name="Carder C."/>
            <person name="Carter N.P."/>
            <person name="Chapman J.C."/>
            <person name="Clamp M."/>
            <person name="Clark G."/>
            <person name="Clark L.N."/>
            <person name="Clark S.Y."/>
            <person name="Clee C.M."/>
            <person name="Clegg S."/>
            <person name="Cobley V.E."/>
            <person name="Collier R.E."/>
            <person name="Connor R.E."/>
            <person name="Corby N.R."/>
            <person name="Coulson A."/>
            <person name="Coville G.J."/>
            <person name="Deadman R."/>
            <person name="Dhami P.D."/>
            <person name="Dunn M."/>
            <person name="Ellington A.G."/>
            <person name="Frankland J.A."/>
            <person name="Fraser A."/>
            <person name="French L."/>
            <person name="Garner P."/>
            <person name="Grafham D.V."/>
            <person name="Griffiths C."/>
            <person name="Griffiths M.N.D."/>
            <person name="Gwilliam R."/>
            <person name="Hall R.E."/>
            <person name="Hammond S."/>
            <person name="Harley J.L."/>
            <person name="Heath P.D."/>
            <person name="Ho S."/>
            <person name="Holden J.L."/>
            <person name="Howden P.J."/>
            <person name="Huckle E."/>
            <person name="Hunt A.R."/>
            <person name="Hunt S.E."/>
            <person name="Jekosch K."/>
            <person name="Johnson C.M."/>
            <person name="Johnson D."/>
            <person name="Kay M.P."/>
            <person name="Kimberley A.M."/>
            <person name="King A."/>
            <person name="Knights A."/>
            <person name="Laird G.K."/>
            <person name="Lawlor S."/>
            <person name="Lehvaeslaiho M.H."/>
            <person name="Leversha M.A."/>
            <person name="Lloyd C."/>
            <person name="Lloyd D.M."/>
            <person name="Lovell J.D."/>
            <person name="Marsh V.L."/>
            <person name="Martin S.L."/>
            <person name="McConnachie L.J."/>
            <person name="McLay K."/>
            <person name="McMurray A.A."/>
            <person name="Milne S.A."/>
            <person name="Mistry D."/>
            <person name="Moore M.J.F."/>
            <person name="Mullikin J.C."/>
            <person name="Nickerson T."/>
            <person name="Oliver K."/>
            <person name="Parker A."/>
            <person name="Patel R."/>
            <person name="Pearce T.A.V."/>
            <person name="Peck A.I."/>
            <person name="Phillimore B.J.C.T."/>
            <person name="Prathalingam S.R."/>
            <person name="Plumb R.W."/>
            <person name="Ramsay H."/>
            <person name="Rice C.M."/>
            <person name="Ross M.T."/>
            <person name="Scott C.E."/>
            <person name="Sehra H.K."/>
            <person name="Shownkeen R."/>
            <person name="Sims S."/>
            <person name="Skuce C.D."/>
            <person name="Smith M.L."/>
            <person name="Soderlund C."/>
            <person name="Steward C.A."/>
            <person name="Sulston J.E."/>
            <person name="Swann R.M."/>
            <person name="Sycamore N."/>
            <person name="Taylor R."/>
            <person name="Tee L."/>
            <person name="Thomas D.W."/>
            <person name="Thorpe A."/>
            <person name="Tracey A."/>
            <person name="Tromans A.C."/>
            <person name="Vaudin M."/>
            <person name="Wall M."/>
            <person name="Wallis J.M."/>
            <person name="Whitehead S.L."/>
            <person name="Whittaker P."/>
            <person name="Willey D.L."/>
            <person name="Williams L."/>
            <person name="Williams S.A."/>
            <person name="Wilming L."/>
            <person name="Wray P.W."/>
            <person name="Hubbard T."/>
            <person name="Durbin R.M."/>
            <person name="Bentley D.R."/>
            <person name="Beck S."/>
            <person name="Rogers J."/>
        </authorList>
    </citation>
    <scope>NUCLEOTIDE SEQUENCE [LARGE SCALE GENOMIC DNA]</scope>
</reference>
<reference key="2">
    <citation type="submission" date="2005-09" db="EMBL/GenBank/DDBJ databases">
        <authorList>
            <person name="Mural R.J."/>
            <person name="Istrail S."/>
            <person name="Sutton G.G."/>
            <person name="Florea L."/>
            <person name="Halpern A.L."/>
            <person name="Mobarry C.M."/>
            <person name="Lippert R."/>
            <person name="Walenz B."/>
            <person name="Shatkay H."/>
            <person name="Dew I."/>
            <person name="Miller J.R."/>
            <person name="Flanigan M.J."/>
            <person name="Edwards N.J."/>
            <person name="Bolanos R."/>
            <person name="Fasulo D."/>
            <person name="Halldorsson B.V."/>
            <person name="Hannenhalli S."/>
            <person name="Turner R."/>
            <person name="Yooseph S."/>
            <person name="Lu F."/>
            <person name="Nusskern D.R."/>
            <person name="Shue B.C."/>
            <person name="Zheng X.H."/>
            <person name="Zhong F."/>
            <person name="Delcher A.L."/>
            <person name="Huson D.H."/>
            <person name="Kravitz S.A."/>
            <person name="Mouchard L."/>
            <person name="Reinert K."/>
            <person name="Remington K.A."/>
            <person name="Clark A.G."/>
            <person name="Waterman M.S."/>
            <person name="Eichler E.E."/>
            <person name="Adams M.D."/>
            <person name="Hunkapiller M.W."/>
            <person name="Myers E.W."/>
            <person name="Venter J.C."/>
        </authorList>
    </citation>
    <scope>NUCLEOTIDE SEQUENCE [LARGE SCALE GENOMIC DNA]</scope>
</reference>
<reference key="3">
    <citation type="journal article" date="2004" name="Genome Res.">
        <title>The status, quality, and expansion of the NIH full-length cDNA project: the Mammalian Gene Collection (MGC).</title>
        <authorList>
            <consortium name="The MGC Project Team"/>
        </authorList>
    </citation>
    <scope>NUCLEOTIDE SEQUENCE [LARGE SCALE MRNA]</scope>
    <source>
        <tissue>Testis</tissue>
    </source>
</reference>
<protein>
    <recommendedName>
        <fullName>Actin-like protein 10</fullName>
    </recommendedName>
</protein>
<feature type="chain" id="PRO_0000232865" description="Actin-like protein 10">
    <location>
        <begin position="1"/>
        <end position="245"/>
    </location>
</feature>
<accession>Q5JWF8</accession>
<accession>B9EH76</accession>
<evidence type="ECO:0000305" key="1"/>
<gene>
    <name type="primary">ACTL10</name>
    <name type="synonym">C20orf134</name>
</gene>
<sequence>MASTALLALCSTGAFSGLAVEAGAGVCHATPIYAGHSWHQATFRLNVAGSTLSRYLRDLLVAANPDLLQQALPRKAITHLKKRSCYVSLDFEGDLRDPARHHPASFSVGNGCCVCLSSERFRCPEPIFQPGLLGQAEQGLPALAFRALQKMPKTLRTRLADTVVLAGGSTLFPGFAERLDKELEAQCRRHGYAALRPHLVAKHGRGMAVWTGGSMVASLHSFQRRWITRAMYQECGSRLLYDVFN</sequence>